<accession>B9MNR6</accession>
<keyword id="KW-0963">Cytoplasm</keyword>
<keyword id="KW-0694">RNA-binding</keyword>
<sequence length="158" mass="18534">MSEKNKQNDIKVIATNRKAYHDYFIEETIEAGIELKGTEVKSVRLGHVNLKDSFARVENGEVFLYNMHISPYEKGNIFNVDPMRDRKLLLHKHEINRLAGYVQQKGYTLIPLKIYIKRGKIKVELAVAKGKKLYDKREAIAKRDAELEIRKKMKEYLR</sequence>
<protein>
    <recommendedName>
        <fullName evidence="1">SsrA-binding protein</fullName>
    </recommendedName>
    <alternativeName>
        <fullName evidence="1">Small protein B</fullName>
    </alternativeName>
</protein>
<proteinExistence type="inferred from homology"/>
<evidence type="ECO:0000255" key="1">
    <source>
        <dbReference type="HAMAP-Rule" id="MF_00023"/>
    </source>
</evidence>
<reference key="1">
    <citation type="submission" date="2009-01" db="EMBL/GenBank/DDBJ databases">
        <title>Complete sequence of chromosome of Caldicellulosiruptor becscii DSM 6725.</title>
        <authorList>
            <person name="Lucas S."/>
            <person name="Copeland A."/>
            <person name="Lapidus A."/>
            <person name="Glavina del Rio T."/>
            <person name="Tice H."/>
            <person name="Bruce D."/>
            <person name="Goodwin L."/>
            <person name="Pitluck S."/>
            <person name="Sims D."/>
            <person name="Meincke L."/>
            <person name="Brettin T."/>
            <person name="Detter J.C."/>
            <person name="Han C."/>
            <person name="Larimer F."/>
            <person name="Land M."/>
            <person name="Hauser L."/>
            <person name="Kyrpides N."/>
            <person name="Ovchinnikova G."/>
            <person name="Kataeva I."/>
            <person name="Adams M.W.W."/>
        </authorList>
    </citation>
    <scope>NUCLEOTIDE SEQUENCE [LARGE SCALE GENOMIC DNA]</scope>
    <source>
        <strain>ATCC BAA-1888 / DSM 6725 / KCTC 15123 / Z-1320</strain>
    </source>
</reference>
<organism>
    <name type="scientific">Caldicellulosiruptor bescii (strain ATCC BAA-1888 / DSM 6725 / KCTC 15123 / Z-1320)</name>
    <name type="common">Anaerocellum thermophilum</name>
    <dbReference type="NCBI Taxonomy" id="521460"/>
    <lineage>
        <taxon>Bacteria</taxon>
        <taxon>Bacillati</taxon>
        <taxon>Bacillota</taxon>
        <taxon>Bacillota incertae sedis</taxon>
        <taxon>Caldicellulosiruptorales</taxon>
        <taxon>Caldicellulosiruptoraceae</taxon>
        <taxon>Caldicellulosiruptor</taxon>
    </lineage>
</organism>
<dbReference type="EMBL" id="CP001393">
    <property type="protein sequence ID" value="ACM59595.1"/>
    <property type="molecule type" value="Genomic_DNA"/>
</dbReference>
<dbReference type="RefSeq" id="WP_015907058.1">
    <property type="nucleotide sequence ID" value="NC_012034.1"/>
</dbReference>
<dbReference type="SMR" id="B9MNR6"/>
<dbReference type="STRING" id="521460.Athe_0463"/>
<dbReference type="GeneID" id="31771822"/>
<dbReference type="KEGG" id="ate:Athe_0463"/>
<dbReference type="eggNOG" id="COG0691">
    <property type="taxonomic scope" value="Bacteria"/>
</dbReference>
<dbReference type="HOGENOM" id="CLU_108953_0_0_9"/>
<dbReference type="Proteomes" id="UP000007723">
    <property type="component" value="Chromosome"/>
</dbReference>
<dbReference type="GO" id="GO:0005829">
    <property type="term" value="C:cytosol"/>
    <property type="evidence" value="ECO:0007669"/>
    <property type="project" value="TreeGrafter"/>
</dbReference>
<dbReference type="GO" id="GO:0003723">
    <property type="term" value="F:RNA binding"/>
    <property type="evidence" value="ECO:0007669"/>
    <property type="project" value="UniProtKB-UniRule"/>
</dbReference>
<dbReference type="GO" id="GO:0070929">
    <property type="term" value="P:trans-translation"/>
    <property type="evidence" value="ECO:0007669"/>
    <property type="project" value="UniProtKB-UniRule"/>
</dbReference>
<dbReference type="CDD" id="cd09294">
    <property type="entry name" value="SmpB"/>
    <property type="match status" value="1"/>
</dbReference>
<dbReference type="Gene3D" id="2.40.280.10">
    <property type="match status" value="1"/>
</dbReference>
<dbReference type="HAMAP" id="MF_00023">
    <property type="entry name" value="SmpB"/>
    <property type="match status" value="1"/>
</dbReference>
<dbReference type="InterPro" id="IPR023620">
    <property type="entry name" value="SmpB"/>
</dbReference>
<dbReference type="InterPro" id="IPR000037">
    <property type="entry name" value="SsrA-bd_prot"/>
</dbReference>
<dbReference type="InterPro" id="IPR020081">
    <property type="entry name" value="SsrA-bd_prot_CS"/>
</dbReference>
<dbReference type="NCBIfam" id="NF003843">
    <property type="entry name" value="PRK05422.1"/>
    <property type="match status" value="1"/>
</dbReference>
<dbReference type="NCBIfam" id="TIGR00086">
    <property type="entry name" value="smpB"/>
    <property type="match status" value="1"/>
</dbReference>
<dbReference type="PANTHER" id="PTHR30308:SF2">
    <property type="entry name" value="SSRA-BINDING PROTEIN"/>
    <property type="match status" value="1"/>
</dbReference>
<dbReference type="PANTHER" id="PTHR30308">
    <property type="entry name" value="TMRNA-BINDING COMPONENT OF TRANS-TRANSLATION TAGGING COMPLEX"/>
    <property type="match status" value="1"/>
</dbReference>
<dbReference type="Pfam" id="PF01668">
    <property type="entry name" value="SmpB"/>
    <property type="match status" value="1"/>
</dbReference>
<dbReference type="SUPFAM" id="SSF74982">
    <property type="entry name" value="Small protein B (SmpB)"/>
    <property type="match status" value="1"/>
</dbReference>
<dbReference type="PROSITE" id="PS01317">
    <property type="entry name" value="SSRP"/>
    <property type="match status" value="1"/>
</dbReference>
<name>SSRP_CALBD</name>
<comment type="function">
    <text evidence="1">Required for rescue of stalled ribosomes mediated by trans-translation. Binds to transfer-messenger RNA (tmRNA), required for stable association of tmRNA with ribosomes. tmRNA and SmpB together mimic tRNA shape, replacing the anticodon stem-loop with SmpB. tmRNA is encoded by the ssrA gene; the 2 termini fold to resemble tRNA(Ala) and it encodes a 'tag peptide', a short internal open reading frame. During trans-translation Ala-aminoacylated tmRNA acts like a tRNA, entering the A-site of stalled ribosomes, displacing the stalled mRNA. The ribosome then switches to translate the ORF on the tmRNA; the nascent peptide is terminated with the 'tag peptide' encoded by the tmRNA and targeted for degradation. The ribosome is freed to recommence translation, which seems to be the essential function of trans-translation.</text>
</comment>
<comment type="subcellular location">
    <subcellularLocation>
        <location evidence="1">Cytoplasm</location>
    </subcellularLocation>
    <text evidence="1">The tmRNA-SmpB complex associates with stalled 70S ribosomes.</text>
</comment>
<comment type="similarity">
    <text evidence="1">Belongs to the SmpB family.</text>
</comment>
<feature type="chain" id="PRO_1000197600" description="SsrA-binding protein">
    <location>
        <begin position="1"/>
        <end position="158"/>
    </location>
</feature>
<gene>
    <name evidence="1" type="primary">smpB</name>
    <name type="ordered locus">Athe_0463</name>
</gene>